<sequence>MIEEEVLKIIKPTEEDKKGIEKVLEIIRERLNKLDFEVEGSFRKGTWLRQDTDIDVFVFYPKDVGKEYLERNALNDIINRIKDLDYTLAYAEHPYVIVNINNVEVDIVPALRVESGDKAITAVDRTPFHTKYVTSHLDERGKDEVRLLKRFMKGIGVYGAELKVQGFSGYATELLIIYYGNFRKVLEEASKWKHPIKIELTKPMKIFSEPLIIPDPVDPKRNVTAAVSLKNIATFSIAAKYYLKNPSIEFFFPSKKVEEKVKGDVLILRLNLDEKSSEDIVWGQIKRSVNKIERALKQYGFRVIDVQAWGDTNNITIAVQLESKNIGQYYLNIGPQYYSETIEDFIQKNDNIWVGEDGRLYSIKERKEYDAETIAKKNIVLKVKYNIESYWLQNKEDQQIMKFLRKTPTWLK</sequence>
<keyword id="KW-0067">ATP-binding</keyword>
<keyword id="KW-0460">Magnesium</keyword>
<keyword id="KW-0479">Metal-binding</keyword>
<keyword id="KW-0547">Nucleotide-binding</keyword>
<keyword id="KW-0548">Nucleotidyltransferase</keyword>
<keyword id="KW-0692">RNA repair</keyword>
<keyword id="KW-0694">RNA-binding</keyword>
<keyword id="KW-0808">Transferase</keyword>
<keyword id="KW-0819">tRNA processing</keyword>
<dbReference type="EC" id="2.7.7.72" evidence="1"/>
<dbReference type="EMBL" id="CP001404">
    <property type="protein sequence ID" value="ACP48755.1"/>
    <property type="molecule type" value="Genomic_DNA"/>
</dbReference>
<dbReference type="RefSeq" id="WP_012717536.1">
    <property type="nucleotide sequence ID" value="NC_012623.1"/>
</dbReference>
<dbReference type="SMR" id="C3NHZ5"/>
<dbReference type="GeneID" id="7810631"/>
<dbReference type="KEGG" id="sin:YN1551_1673"/>
<dbReference type="HOGENOM" id="CLU_044679_1_0_2"/>
<dbReference type="Proteomes" id="UP000006818">
    <property type="component" value="Chromosome"/>
</dbReference>
<dbReference type="GO" id="GO:0005524">
    <property type="term" value="F:ATP binding"/>
    <property type="evidence" value="ECO:0007669"/>
    <property type="project" value="UniProtKB-UniRule"/>
</dbReference>
<dbReference type="GO" id="GO:0004810">
    <property type="term" value="F:CCA tRNA nucleotidyltransferase activity"/>
    <property type="evidence" value="ECO:0007669"/>
    <property type="project" value="UniProtKB-UniRule"/>
</dbReference>
<dbReference type="GO" id="GO:0000287">
    <property type="term" value="F:magnesium ion binding"/>
    <property type="evidence" value="ECO:0007669"/>
    <property type="project" value="UniProtKB-UniRule"/>
</dbReference>
<dbReference type="GO" id="GO:0000049">
    <property type="term" value="F:tRNA binding"/>
    <property type="evidence" value="ECO:0007669"/>
    <property type="project" value="UniProtKB-UniRule"/>
</dbReference>
<dbReference type="GO" id="GO:0042245">
    <property type="term" value="P:RNA repair"/>
    <property type="evidence" value="ECO:0007669"/>
    <property type="project" value="UniProtKB-KW"/>
</dbReference>
<dbReference type="GO" id="GO:0001680">
    <property type="term" value="P:tRNA 3'-terminal CCA addition"/>
    <property type="evidence" value="ECO:0007669"/>
    <property type="project" value="UniProtKB-UniRule"/>
</dbReference>
<dbReference type="CDD" id="cd05400">
    <property type="entry name" value="NT_2-5OAS_ClassI-CCAase"/>
    <property type="match status" value="1"/>
</dbReference>
<dbReference type="Gene3D" id="3.30.460.10">
    <property type="entry name" value="Beta Polymerase, domain 2"/>
    <property type="match status" value="1"/>
</dbReference>
<dbReference type="Gene3D" id="1.10.1410.30">
    <property type="entry name" value="CCA tRNA nucleotidyltransferase, domain 2"/>
    <property type="match status" value="1"/>
</dbReference>
<dbReference type="Gene3D" id="3.30.70.590">
    <property type="entry name" value="Poly(A) polymerase predicted RNA binding domain"/>
    <property type="match status" value="1"/>
</dbReference>
<dbReference type="HAMAP" id="MF_01264">
    <property type="entry name" value="CCA_arch"/>
    <property type="match status" value="1"/>
</dbReference>
<dbReference type="InterPro" id="IPR048833">
    <property type="entry name" value="CAA_C"/>
</dbReference>
<dbReference type="InterPro" id="IPR008229">
    <property type="entry name" value="CCA-adding_arc"/>
</dbReference>
<dbReference type="InterPro" id="IPR042090">
    <property type="entry name" value="CCA_tRNA_nucleotrans_2"/>
</dbReference>
<dbReference type="InterPro" id="IPR006116">
    <property type="entry name" value="NT_2-5OAS_ClassI-CCAase"/>
</dbReference>
<dbReference type="InterPro" id="IPR043519">
    <property type="entry name" value="NT_sf"/>
</dbReference>
<dbReference type="InterPro" id="IPR011068">
    <property type="entry name" value="NuclTrfase_I-like_C"/>
</dbReference>
<dbReference type="InterPro" id="IPR002934">
    <property type="entry name" value="Polymerase_NTP_transf_dom"/>
</dbReference>
<dbReference type="InterPro" id="IPR015329">
    <property type="entry name" value="tRNA_NucTransf2"/>
</dbReference>
<dbReference type="NCBIfam" id="TIGR03671">
    <property type="entry name" value="cca_archaeal"/>
    <property type="match status" value="1"/>
</dbReference>
<dbReference type="PANTHER" id="PTHR39643">
    <property type="entry name" value="CCA-ADDING ENZYME"/>
    <property type="match status" value="1"/>
</dbReference>
<dbReference type="PANTHER" id="PTHR39643:SF1">
    <property type="entry name" value="CCA-ADDING ENZYME"/>
    <property type="match status" value="1"/>
</dbReference>
<dbReference type="Pfam" id="PF21133">
    <property type="entry name" value="CAA_C"/>
    <property type="match status" value="1"/>
</dbReference>
<dbReference type="Pfam" id="PF01909">
    <property type="entry name" value="NTP_transf_2"/>
    <property type="match status" value="1"/>
</dbReference>
<dbReference type="Pfam" id="PF09249">
    <property type="entry name" value="tRNA_NucTransf2"/>
    <property type="match status" value="1"/>
</dbReference>
<dbReference type="PIRSF" id="PIRSF005335">
    <property type="entry name" value="CCA_arch"/>
    <property type="match status" value="1"/>
</dbReference>
<dbReference type="SUPFAM" id="SSF81301">
    <property type="entry name" value="Nucleotidyltransferase"/>
    <property type="match status" value="1"/>
</dbReference>
<dbReference type="SUPFAM" id="SSF55003">
    <property type="entry name" value="PAP/Archaeal CCA-adding enzyme, C-terminal domain"/>
    <property type="match status" value="1"/>
</dbReference>
<dbReference type="SUPFAM" id="SSF81631">
    <property type="entry name" value="PAP/OAS1 substrate-binding domain"/>
    <property type="match status" value="1"/>
</dbReference>
<reference key="1">
    <citation type="journal article" date="2009" name="Proc. Natl. Acad. Sci. U.S.A.">
        <title>Biogeography of the Sulfolobus islandicus pan-genome.</title>
        <authorList>
            <person name="Reno M.L."/>
            <person name="Held N.L."/>
            <person name="Fields C.J."/>
            <person name="Burke P.V."/>
            <person name="Whitaker R.J."/>
        </authorList>
    </citation>
    <scope>NUCLEOTIDE SEQUENCE [LARGE SCALE GENOMIC DNA]</scope>
    <source>
        <strain>Y.N.15.51 / Yellowstone #2</strain>
    </source>
</reference>
<comment type="function">
    <text evidence="1">Catalyzes the addition and repair of the essential 3'-terminal CCA sequence in tRNAs without using a nucleic acid template. Adds these three nucleotides in the order of C, C, and A to the tRNA nucleotide-73, using CTP and ATP as substrates and producing inorganic pyrophosphate. tRNA 3'-terminal CCA addition is required both for tRNA processing and repair. Also involved in tRNA surveillance by mediating tandem CCA addition to generate a CCACCA at the 3' terminus of unstable tRNAs. While stable tRNAs receive only 3'-terminal CCA, unstable tRNAs are marked with CCACCA and rapidly degraded.</text>
</comment>
<comment type="catalytic activity">
    <reaction evidence="1">
        <text>a tRNA precursor + 2 CTP + ATP = a tRNA with a 3' CCA end + 3 diphosphate</text>
        <dbReference type="Rhea" id="RHEA:14433"/>
        <dbReference type="Rhea" id="RHEA-COMP:10465"/>
        <dbReference type="Rhea" id="RHEA-COMP:10468"/>
        <dbReference type="ChEBI" id="CHEBI:30616"/>
        <dbReference type="ChEBI" id="CHEBI:33019"/>
        <dbReference type="ChEBI" id="CHEBI:37563"/>
        <dbReference type="ChEBI" id="CHEBI:74896"/>
        <dbReference type="ChEBI" id="CHEBI:83071"/>
        <dbReference type="EC" id="2.7.7.72"/>
    </reaction>
</comment>
<comment type="catalytic activity">
    <reaction evidence="1">
        <text>a tRNA with a 3' CCA end + 2 CTP + ATP = a tRNA with a 3' CCACCA end + 3 diphosphate</text>
        <dbReference type="Rhea" id="RHEA:76235"/>
        <dbReference type="Rhea" id="RHEA-COMP:10468"/>
        <dbReference type="Rhea" id="RHEA-COMP:18655"/>
        <dbReference type="ChEBI" id="CHEBI:30616"/>
        <dbReference type="ChEBI" id="CHEBI:33019"/>
        <dbReference type="ChEBI" id="CHEBI:37563"/>
        <dbReference type="ChEBI" id="CHEBI:83071"/>
        <dbReference type="ChEBI" id="CHEBI:195187"/>
    </reaction>
    <physiologicalReaction direction="left-to-right" evidence="1">
        <dbReference type="Rhea" id="RHEA:76236"/>
    </physiologicalReaction>
</comment>
<comment type="cofactor">
    <cofactor evidence="1">
        <name>Mg(2+)</name>
        <dbReference type="ChEBI" id="CHEBI:18420"/>
    </cofactor>
</comment>
<comment type="subunit">
    <text evidence="1">Homodimer.</text>
</comment>
<comment type="miscellaneous">
    <text evidence="1">A single active site specifically recognizes both ATP and CTP and is responsible for their addition.</text>
</comment>
<comment type="similarity">
    <text evidence="1">Belongs to the tRNA nucleotidyltransferase/poly(A) polymerase family. Archaeal CCA-adding enzyme subfamily.</text>
</comment>
<organism>
    <name type="scientific">Saccharolobus islandicus (strain Y.N.15.51 / Yellowstone #2)</name>
    <name type="common">Sulfolobus islandicus</name>
    <dbReference type="NCBI Taxonomy" id="419942"/>
    <lineage>
        <taxon>Archaea</taxon>
        <taxon>Thermoproteota</taxon>
        <taxon>Thermoprotei</taxon>
        <taxon>Sulfolobales</taxon>
        <taxon>Sulfolobaceae</taxon>
        <taxon>Saccharolobus</taxon>
    </lineage>
</organism>
<accession>C3NHZ5</accession>
<protein>
    <recommendedName>
        <fullName evidence="1">CCA-adding enzyme</fullName>
        <ecNumber evidence="1">2.7.7.72</ecNumber>
    </recommendedName>
    <alternativeName>
        <fullName evidence="1">CCA tRNA nucleotidyltransferase</fullName>
    </alternativeName>
    <alternativeName>
        <fullName evidence="1">tRNA CCA-pyrophosphorylase</fullName>
    </alternativeName>
    <alternativeName>
        <fullName evidence="1">tRNA adenylyl-/cytidylyl- transferase</fullName>
    </alternativeName>
    <alternativeName>
        <fullName evidence="1">tRNA nucleotidyltransferase</fullName>
    </alternativeName>
    <alternativeName>
        <fullName evidence="1">tRNA-NT</fullName>
    </alternativeName>
</protein>
<gene>
    <name evidence="1" type="primary">cca</name>
    <name type="ordered locus">YN1551_1673</name>
</gene>
<proteinExistence type="inferred from homology"/>
<name>CCA_SACI1</name>
<evidence type="ECO:0000255" key="1">
    <source>
        <dbReference type="HAMAP-Rule" id="MF_01264"/>
    </source>
</evidence>
<feature type="chain" id="PRO_1000214144" description="CCA-adding enzyme">
    <location>
        <begin position="1"/>
        <end position="412"/>
    </location>
</feature>
<feature type="binding site" evidence="1">
    <location>
        <position position="41"/>
    </location>
    <ligand>
        <name>ATP</name>
        <dbReference type="ChEBI" id="CHEBI:30616"/>
    </ligand>
</feature>
<feature type="binding site" evidence="1">
    <location>
        <position position="41"/>
    </location>
    <ligand>
        <name>CTP</name>
        <dbReference type="ChEBI" id="CHEBI:37563"/>
    </ligand>
</feature>
<feature type="binding site" evidence="1">
    <location>
        <position position="44"/>
    </location>
    <ligand>
        <name>ATP</name>
        <dbReference type="ChEBI" id="CHEBI:30616"/>
    </ligand>
</feature>
<feature type="binding site" evidence="1">
    <location>
        <position position="44"/>
    </location>
    <ligand>
        <name>CTP</name>
        <dbReference type="ChEBI" id="CHEBI:37563"/>
    </ligand>
</feature>
<feature type="binding site" evidence="1">
    <location>
        <position position="53"/>
    </location>
    <ligand>
        <name>Mg(2+)</name>
        <dbReference type="ChEBI" id="CHEBI:18420"/>
    </ligand>
</feature>
<feature type="binding site" evidence="1">
    <location>
        <position position="55"/>
    </location>
    <ligand>
        <name>Mg(2+)</name>
        <dbReference type="ChEBI" id="CHEBI:18420"/>
    </ligand>
</feature>
<feature type="binding site" evidence="1">
    <location>
        <position position="106"/>
    </location>
    <ligand>
        <name>Mg(2+)</name>
        <dbReference type="ChEBI" id="CHEBI:18420"/>
    </ligand>
</feature>
<feature type="binding site" evidence="1">
    <location>
        <position position="129"/>
    </location>
    <ligand>
        <name>ATP</name>
        <dbReference type="ChEBI" id="CHEBI:30616"/>
    </ligand>
</feature>
<feature type="binding site" evidence="1">
    <location>
        <position position="129"/>
    </location>
    <ligand>
        <name>CTP</name>
        <dbReference type="ChEBI" id="CHEBI:37563"/>
    </ligand>
</feature>
<feature type="binding site" evidence="1">
    <location>
        <position position="149"/>
    </location>
    <ligand>
        <name>ATP</name>
        <dbReference type="ChEBI" id="CHEBI:30616"/>
    </ligand>
</feature>
<feature type="binding site" evidence="1">
    <location>
        <position position="149"/>
    </location>
    <ligand>
        <name>CTP</name>
        <dbReference type="ChEBI" id="CHEBI:37563"/>
    </ligand>
</feature>
<feature type="binding site" evidence="1">
    <location>
        <position position="158"/>
    </location>
    <ligand>
        <name>ATP</name>
        <dbReference type="ChEBI" id="CHEBI:30616"/>
    </ligand>
</feature>
<feature type="binding site" evidence="1">
    <location>
        <position position="158"/>
    </location>
    <ligand>
        <name>CTP</name>
        <dbReference type="ChEBI" id="CHEBI:37563"/>
    </ligand>
</feature>